<gene>
    <name type="primary">mrps9</name>
    <name type="ORF">SPAC29A4.03c</name>
</gene>
<proteinExistence type="evidence at protein level"/>
<dbReference type="EMBL" id="CU329670">
    <property type="protein sequence ID" value="CAB10130.2"/>
    <property type="status" value="ALT_FRAME"/>
    <property type="molecule type" value="Genomic_DNA"/>
</dbReference>
<dbReference type="PIR" id="T38486">
    <property type="entry name" value="T38486"/>
</dbReference>
<dbReference type="RefSeq" id="NP_594879.2">
    <property type="nucleotide sequence ID" value="NM_001020308.2"/>
</dbReference>
<dbReference type="SMR" id="O14006"/>
<dbReference type="BioGRID" id="279074">
    <property type="interactions" value="2"/>
</dbReference>
<dbReference type="ComplexPortal" id="CPX-10315">
    <property type="entry name" value="37S mitochondrial small ribosomal subunit"/>
</dbReference>
<dbReference type="FunCoup" id="O14006">
    <property type="interactions" value="262"/>
</dbReference>
<dbReference type="STRING" id="284812.O14006"/>
<dbReference type="PaxDb" id="4896-SPAC29A4.03c.1"/>
<dbReference type="EnsemblFungi" id="SPAC29A4.03c.1">
    <property type="protein sequence ID" value="SPAC29A4.03c.1:pep"/>
    <property type="gene ID" value="SPAC29A4.03c"/>
</dbReference>
<dbReference type="GeneID" id="2542620"/>
<dbReference type="KEGG" id="spo:2542620"/>
<dbReference type="PomBase" id="SPAC29A4.03c">
    <property type="gene designation" value="mrps9"/>
</dbReference>
<dbReference type="VEuPathDB" id="FungiDB:SPAC29A4.03c"/>
<dbReference type="eggNOG" id="KOG1697">
    <property type="taxonomic scope" value="Eukaryota"/>
</dbReference>
<dbReference type="HOGENOM" id="CLU_036531_0_0_1"/>
<dbReference type="InParanoid" id="O14006"/>
<dbReference type="OMA" id="RESAMWA"/>
<dbReference type="PRO" id="PR:O14006"/>
<dbReference type="Proteomes" id="UP000002485">
    <property type="component" value="Chromosome I"/>
</dbReference>
<dbReference type="GO" id="GO:0005763">
    <property type="term" value="C:mitochondrial small ribosomal subunit"/>
    <property type="evidence" value="ECO:0000318"/>
    <property type="project" value="GO_Central"/>
</dbReference>
<dbReference type="GO" id="GO:0005739">
    <property type="term" value="C:mitochondrion"/>
    <property type="evidence" value="ECO:0007005"/>
    <property type="project" value="PomBase"/>
</dbReference>
<dbReference type="GO" id="GO:0003723">
    <property type="term" value="F:RNA binding"/>
    <property type="evidence" value="ECO:0000318"/>
    <property type="project" value="GO_Central"/>
</dbReference>
<dbReference type="GO" id="GO:0003735">
    <property type="term" value="F:structural constituent of ribosome"/>
    <property type="evidence" value="ECO:0000318"/>
    <property type="project" value="GO_Central"/>
</dbReference>
<dbReference type="GO" id="GO:0032543">
    <property type="term" value="P:mitochondrial translation"/>
    <property type="evidence" value="ECO:0000250"/>
    <property type="project" value="PomBase"/>
</dbReference>
<dbReference type="FunFam" id="3.30.230.10:FF:000001">
    <property type="entry name" value="30S ribosomal protein S9"/>
    <property type="match status" value="1"/>
</dbReference>
<dbReference type="Gene3D" id="3.30.230.10">
    <property type="match status" value="1"/>
</dbReference>
<dbReference type="InterPro" id="IPR020568">
    <property type="entry name" value="Ribosomal_Su5_D2-typ_SF"/>
</dbReference>
<dbReference type="InterPro" id="IPR000754">
    <property type="entry name" value="Ribosomal_uS9"/>
</dbReference>
<dbReference type="InterPro" id="IPR023035">
    <property type="entry name" value="Ribosomal_uS9_bac/plastid"/>
</dbReference>
<dbReference type="InterPro" id="IPR020574">
    <property type="entry name" value="Ribosomal_uS9_CS"/>
</dbReference>
<dbReference type="InterPro" id="IPR014721">
    <property type="entry name" value="Ribsml_uS5_D2-typ_fold_subgr"/>
</dbReference>
<dbReference type="NCBIfam" id="NF001099">
    <property type="entry name" value="PRK00132.1"/>
    <property type="match status" value="1"/>
</dbReference>
<dbReference type="PANTHER" id="PTHR21569">
    <property type="entry name" value="RIBOSOMAL PROTEIN S9"/>
    <property type="match status" value="1"/>
</dbReference>
<dbReference type="PANTHER" id="PTHR21569:SF1">
    <property type="entry name" value="SMALL RIBOSOMAL SUBUNIT PROTEIN US9M"/>
    <property type="match status" value="1"/>
</dbReference>
<dbReference type="Pfam" id="PF00380">
    <property type="entry name" value="Ribosomal_S9"/>
    <property type="match status" value="1"/>
</dbReference>
<dbReference type="SUPFAM" id="SSF54211">
    <property type="entry name" value="Ribosomal protein S5 domain 2-like"/>
    <property type="match status" value="1"/>
</dbReference>
<dbReference type="PROSITE" id="PS00360">
    <property type="entry name" value="RIBOSOMAL_S9"/>
    <property type="match status" value="1"/>
</dbReference>
<accession>O14006</accession>
<reference key="1">
    <citation type="journal article" date="2002" name="Nature">
        <title>The genome sequence of Schizosaccharomyces pombe.</title>
        <authorList>
            <person name="Wood V."/>
            <person name="Gwilliam R."/>
            <person name="Rajandream M.A."/>
            <person name="Lyne M.H."/>
            <person name="Lyne R."/>
            <person name="Stewart A."/>
            <person name="Sgouros J.G."/>
            <person name="Peat N."/>
            <person name="Hayles J."/>
            <person name="Baker S.G."/>
            <person name="Basham D."/>
            <person name="Bowman S."/>
            <person name="Brooks K."/>
            <person name="Brown D."/>
            <person name="Brown S."/>
            <person name="Chillingworth T."/>
            <person name="Churcher C.M."/>
            <person name="Collins M."/>
            <person name="Connor R."/>
            <person name="Cronin A."/>
            <person name="Davis P."/>
            <person name="Feltwell T."/>
            <person name="Fraser A."/>
            <person name="Gentles S."/>
            <person name="Goble A."/>
            <person name="Hamlin N."/>
            <person name="Harris D.E."/>
            <person name="Hidalgo J."/>
            <person name="Hodgson G."/>
            <person name="Holroyd S."/>
            <person name="Hornsby T."/>
            <person name="Howarth S."/>
            <person name="Huckle E.J."/>
            <person name="Hunt S."/>
            <person name="Jagels K."/>
            <person name="James K.D."/>
            <person name="Jones L."/>
            <person name="Jones M."/>
            <person name="Leather S."/>
            <person name="McDonald S."/>
            <person name="McLean J."/>
            <person name="Mooney P."/>
            <person name="Moule S."/>
            <person name="Mungall K.L."/>
            <person name="Murphy L.D."/>
            <person name="Niblett D."/>
            <person name="Odell C."/>
            <person name="Oliver K."/>
            <person name="O'Neil S."/>
            <person name="Pearson D."/>
            <person name="Quail M.A."/>
            <person name="Rabbinowitsch E."/>
            <person name="Rutherford K.M."/>
            <person name="Rutter S."/>
            <person name="Saunders D."/>
            <person name="Seeger K."/>
            <person name="Sharp S."/>
            <person name="Skelton J."/>
            <person name="Simmonds M.N."/>
            <person name="Squares R."/>
            <person name="Squares S."/>
            <person name="Stevens K."/>
            <person name="Taylor K."/>
            <person name="Taylor R.G."/>
            <person name="Tivey A."/>
            <person name="Walsh S.V."/>
            <person name="Warren T."/>
            <person name="Whitehead S."/>
            <person name="Woodward J.R."/>
            <person name="Volckaert G."/>
            <person name="Aert R."/>
            <person name="Robben J."/>
            <person name="Grymonprez B."/>
            <person name="Weltjens I."/>
            <person name="Vanstreels E."/>
            <person name="Rieger M."/>
            <person name="Schaefer M."/>
            <person name="Mueller-Auer S."/>
            <person name="Gabel C."/>
            <person name="Fuchs M."/>
            <person name="Duesterhoeft A."/>
            <person name="Fritzc C."/>
            <person name="Holzer E."/>
            <person name="Moestl D."/>
            <person name="Hilbert H."/>
            <person name="Borzym K."/>
            <person name="Langer I."/>
            <person name="Beck A."/>
            <person name="Lehrach H."/>
            <person name="Reinhardt R."/>
            <person name="Pohl T.M."/>
            <person name="Eger P."/>
            <person name="Zimmermann W."/>
            <person name="Wedler H."/>
            <person name="Wambutt R."/>
            <person name="Purnelle B."/>
            <person name="Goffeau A."/>
            <person name="Cadieu E."/>
            <person name="Dreano S."/>
            <person name="Gloux S."/>
            <person name="Lelaure V."/>
            <person name="Mottier S."/>
            <person name="Galibert F."/>
            <person name="Aves S.J."/>
            <person name="Xiang Z."/>
            <person name="Hunt C."/>
            <person name="Moore K."/>
            <person name="Hurst S.M."/>
            <person name="Lucas M."/>
            <person name="Rochet M."/>
            <person name="Gaillardin C."/>
            <person name="Tallada V.A."/>
            <person name="Garzon A."/>
            <person name="Thode G."/>
            <person name="Daga R.R."/>
            <person name="Cruzado L."/>
            <person name="Jimenez J."/>
            <person name="Sanchez M."/>
            <person name="del Rey F."/>
            <person name="Benito J."/>
            <person name="Dominguez A."/>
            <person name="Revuelta J.L."/>
            <person name="Moreno S."/>
            <person name="Armstrong J."/>
            <person name="Forsburg S.L."/>
            <person name="Cerutti L."/>
            <person name="Lowe T."/>
            <person name="McCombie W.R."/>
            <person name="Paulsen I."/>
            <person name="Potashkin J."/>
            <person name="Shpakovski G.V."/>
            <person name="Ussery D."/>
            <person name="Barrell B.G."/>
            <person name="Nurse P."/>
        </authorList>
    </citation>
    <scope>NUCLEOTIDE SEQUENCE [LARGE SCALE GENOMIC DNA]</scope>
    <source>
        <strain>972 / ATCC 24843</strain>
    </source>
</reference>
<reference key="2">
    <citation type="journal article" date="2006" name="Nat. Biotechnol.">
        <title>ORFeome cloning and global analysis of protein localization in the fission yeast Schizosaccharomyces pombe.</title>
        <authorList>
            <person name="Matsuyama A."/>
            <person name="Arai R."/>
            <person name="Yashiroda Y."/>
            <person name="Shirai A."/>
            <person name="Kamata A."/>
            <person name="Sekido S."/>
            <person name="Kobayashi Y."/>
            <person name="Hashimoto A."/>
            <person name="Hamamoto M."/>
            <person name="Hiraoka Y."/>
            <person name="Horinouchi S."/>
            <person name="Yoshida M."/>
        </authorList>
    </citation>
    <scope>SUBCELLULAR LOCATION [LARGE SCALE ANALYSIS]</scope>
</reference>
<reference key="3">
    <citation type="journal article" date="2011" name="Genetics">
        <title>Augmented annotation of the Schizosaccharomyces pombe genome reveals additional genes required for growth and viability.</title>
        <authorList>
            <person name="Bitton D.A."/>
            <person name="Wood V."/>
            <person name="Scutt P.J."/>
            <person name="Grallert A."/>
            <person name="Yates T."/>
            <person name="Smith D.L."/>
            <person name="Hagan I.M."/>
            <person name="Miller C.J."/>
        </authorList>
    </citation>
    <scope>IDENTIFICATION OF FRAMESHIFT</scope>
    <scope>IDENTIFICATION BY MASS SPECTROMETRY</scope>
</reference>
<comment type="function">
    <text evidence="1">Component of the mitochondrial ribosome (mitoribosome), a dedicated translation machinery responsible for the synthesis of mitochondrial genome-encoded proteins, including at least some of the essential transmembrane subunits of the mitochondrial respiratory chain. The mitoribosomes are attached to the mitochondrial inner membrane and translation products are cotranslationally integrated into the membrane.</text>
</comment>
<comment type="subunit">
    <text evidence="1">Component of the mitochondrial small ribosomal subunit (mt-SSU). Mature yeast 74S mitochondrial ribosomes consist of a small (37S) and a large (54S) subunit. The 37S small subunit contains a 15S ribosomal RNA (15S mt-rRNA) and at least 32 different proteins. The 54S large subunit contains a 21S rRNA (21S mt-rRNA) and at least 45 different proteins.</text>
</comment>
<comment type="subcellular location">
    <subcellularLocation>
        <location evidence="4">Mitochondrion</location>
    </subcellularLocation>
</comment>
<comment type="similarity">
    <text evidence="5">Belongs to the universal ribosomal protein uS9 family.</text>
</comment>
<comment type="sequence caution" evidence="5">
    <conflict type="frameshift">
        <sequence resource="EMBL-CDS" id="CAB10130"/>
    </conflict>
</comment>
<organism>
    <name type="scientific">Schizosaccharomyces pombe (strain 972 / ATCC 24843)</name>
    <name type="common">Fission yeast</name>
    <dbReference type="NCBI Taxonomy" id="284812"/>
    <lineage>
        <taxon>Eukaryota</taxon>
        <taxon>Fungi</taxon>
        <taxon>Dikarya</taxon>
        <taxon>Ascomycota</taxon>
        <taxon>Taphrinomycotina</taxon>
        <taxon>Schizosaccharomycetes</taxon>
        <taxon>Schizosaccharomycetales</taxon>
        <taxon>Schizosaccharomycetaceae</taxon>
        <taxon>Schizosaccharomyces</taxon>
    </lineage>
</organism>
<feature type="transit peptide" description="Mitochondrion" evidence="2">
    <location>
        <begin position="1"/>
        <end position="11"/>
    </location>
</feature>
<feature type="chain" id="PRO_0000030651" description="Small ribosomal subunit protein uS9m">
    <location>
        <begin position="12"/>
        <end position="271"/>
    </location>
</feature>
<feature type="region of interest" description="Disordered" evidence="3">
    <location>
        <begin position="251"/>
        <end position="271"/>
    </location>
</feature>
<feature type="compositionally biased region" description="Basic residues" evidence="3">
    <location>
        <begin position="252"/>
        <end position="271"/>
    </location>
</feature>
<sequence length="271" mass="31062">MFRSLAKLRCFASSLGLSSHKNIKSVPLIRNIHYIPDNPSYFTQNARFNEIYLHLENILKFAPKIIAAEEDVPKKWKTLEQYQKEFSDPKTTKVGYRKITRLLNELNEIVPEYRTEAVQKALEKFIRPDIVVKTTLKSQMLDENGMSITKGKRKSSKATVKMLPGTGKFYVNGSPFDVYFQRMVHRKHAVYPLAACNRLTNYNVWATVHGGGPTGQSGAVHAAISKSLILQEPSLKQVIKDTHCVLNDKRKVERKKTGQPKARKKYTWVKR</sequence>
<keyword id="KW-0496">Mitochondrion</keyword>
<keyword id="KW-1185">Reference proteome</keyword>
<keyword id="KW-0687">Ribonucleoprotein</keyword>
<keyword id="KW-0689">Ribosomal protein</keyword>
<keyword id="KW-0809">Transit peptide</keyword>
<evidence type="ECO:0000250" key="1">
    <source>
        <dbReference type="UniProtKB" id="P38120"/>
    </source>
</evidence>
<evidence type="ECO:0000255" key="2"/>
<evidence type="ECO:0000256" key="3">
    <source>
        <dbReference type="SAM" id="MobiDB-lite"/>
    </source>
</evidence>
<evidence type="ECO:0000269" key="4">
    <source>
    </source>
</evidence>
<evidence type="ECO:0000305" key="5"/>
<protein>
    <recommendedName>
        <fullName evidence="5">Small ribosomal subunit protein uS9m</fullName>
    </recommendedName>
    <alternativeName>
        <fullName>37S ribosomal protein S9, mitochondrial</fullName>
    </alternativeName>
</protein>
<name>RT09_SCHPO</name>